<organism>
    <name type="scientific">Bifidobacterium longum subsp. infantis (strain ATCC 15697 / DSM 20088 / JCM 1222 / NCTC 11817 / S12)</name>
    <dbReference type="NCBI Taxonomy" id="391904"/>
    <lineage>
        <taxon>Bacteria</taxon>
        <taxon>Bacillati</taxon>
        <taxon>Actinomycetota</taxon>
        <taxon>Actinomycetes</taxon>
        <taxon>Bifidobacteriales</taxon>
        <taxon>Bifidobacteriaceae</taxon>
        <taxon>Bifidobacterium</taxon>
    </lineage>
</organism>
<dbReference type="EMBL" id="CP001095">
    <property type="protein sequence ID" value="ACJ53351.1"/>
    <property type="molecule type" value="Genomic_DNA"/>
</dbReference>
<dbReference type="EMBL" id="AP010889">
    <property type="protein sequence ID" value="BAJ69944.1"/>
    <property type="molecule type" value="Genomic_DNA"/>
</dbReference>
<dbReference type="RefSeq" id="WP_012578523.1">
    <property type="nucleotide sequence ID" value="NZ_JDTT01000025.1"/>
</dbReference>
<dbReference type="SMR" id="B7GNJ5"/>
<dbReference type="KEGG" id="bln:Blon_2293"/>
<dbReference type="KEGG" id="blon:BLIJ_2367"/>
<dbReference type="PATRIC" id="fig|391904.8.peg.2368"/>
<dbReference type="HOGENOM" id="CLU_062853_0_0_11"/>
<dbReference type="Proteomes" id="UP000001360">
    <property type="component" value="Chromosome"/>
</dbReference>
<dbReference type="GO" id="GO:0015934">
    <property type="term" value="C:large ribosomal subunit"/>
    <property type="evidence" value="ECO:0007669"/>
    <property type="project" value="InterPro"/>
</dbReference>
<dbReference type="GO" id="GO:0019843">
    <property type="term" value="F:rRNA binding"/>
    <property type="evidence" value="ECO:0007669"/>
    <property type="project" value="UniProtKB-UniRule"/>
</dbReference>
<dbReference type="GO" id="GO:0003735">
    <property type="term" value="F:structural constituent of ribosome"/>
    <property type="evidence" value="ECO:0007669"/>
    <property type="project" value="InterPro"/>
</dbReference>
<dbReference type="GO" id="GO:0000049">
    <property type="term" value="F:tRNA binding"/>
    <property type="evidence" value="ECO:0007669"/>
    <property type="project" value="UniProtKB-KW"/>
</dbReference>
<dbReference type="GO" id="GO:0006417">
    <property type="term" value="P:regulation of translation"/>
    <property type="evidence" value="ECO:0007669"/>
    <property type="project" value="UniProtKB-KW"/>
</dbReference>
<dbReference type="GO" id="GO:0006412">
    <property type="term" value="P:translation"/>
    <property type="evidence" value="ECO:0007669"/>
    <property type="project" value="UniProtKB-UniRule"/>
</dbReference>
<dbReference type="CDD" id="cd00403">
    <property type="entry name" value="Ribosomal_L1"/>
    <property type="match status" value="1"/>
</dbReference>
<dbReference type="FunFam" id="3.40.50.790:FF:000001">
    <property type="entry name" value="50S ribosomal protein L1"/>
    <property type="match status" value="1"/>
</dbReference>
<dbReference type="Gene3D" id="3.30.190.20">
    <property type="match status" value="1"/>
</dbReference>
<dbReference type="Gene3D" id="3.40.50.790">
    <property type="match status" value="1"/>
</dbReference>
<dbReference type="HAMAP" id="MF_01318_B">
    <property type="entry name" value="Ribosomal_uL1_B"/>
    <property type="match status" value="1"/>
</dbReference>
<dbReference type="InterPro" id="IPR005878">
    <property type="entry name" value="Ribosom_uL1_bac-type"/>
</dbReference>
<dbReference type="InterPro" id="IPR002143">
    <property type="entry name" value="Ribosomal_uL1"/>
</dbReference>
<dbReference type="InterPro" id="IPR023674">
    <property type="entry name" value="Ribosomal_uL1-like"/>
</dbReference>
<dbReference type="InterPro" id="IPR028364">
    <property type="entry name" value="Ribosomal_uL1/biogenesis"/>
</dbReference>
<dbReference type="InterPro" id="IPR016095">
    <property type="entry name" value="Ribosomal_uL1_3-a/b-sand"/>
</dbReference>
<dbReference type="InterPro" id="IPR023673">
    <property type="entry name" value="Ribosomal_uL1_CS"/>
</dbReference>
<dbReference type="NCBIfam" id="TIGR01169">
    <property type="entry name" value="rplA_bact"/>
    <property type="match status" value="1"/>
</dbReference>
<dbReference type="PANTHER" id="PTHR36427">
    <property type="entry name" value="54S RIBOSOMAL PROTEIN L1, MITOCHONDRIAL"/>
    <property type="match status" value="1"/>
</dbReference>
<dbReference type="PANTHER" id="PTHR36427:SF3">
    <property type="entry name" value="LARGE RIBOSOMAL SUBUNIT PROTEIN UL1M"/>
    <property type="match status" value="1"/>
</dbReference>
<dbReference type="Pfam" id="PF00687">
    <property type="entry name" value="Ribosomal_L1"/>
    <property type="match status" value="1"/>
</dbReference>
<dbReference type="PIRSF" id="PIRSF002155">
    <property type="entry name" value="Ribosomal_L1"/>
    <property type="match status" value="1"/>
</dbReference>
<dbReference type="SUPFAM" id="SSF56808">
    <property type="entry name" value="Ribosomal protein L1"/>
    <property type="match status" value="1"/>
</dbReference>
<dbReference type="PROSITE" id="PS01199">
    <property type="entry name" value="RIBOSOMAL_L1"/>
    <property type="match status" value="1"/>
</dbReference>
<accession>B7GNJ5</accession>
<accession>E8MNS8</accession>
<sequence length="230" mass="24841">MVKRSKKYREAAERVDRNNLYTANEAIALLKSMPAYNFDQTVEAVFRLSVDPRKADQLVRGTVNLPHGTGKTAKVLVFARGPKATEATEAGADIVGDDDLIAKVQGGFLDFDAVVATPDMMGKVGRLGRVLGPRGLMPNPKTGTVTMDVTKAVKDIKGGKIEFRVDKNGNLSFLIGKMSFDESALDENFKAVADEVKRLKPATVKGRYLTKATITSTMNPGVPVDPNTLA</sequence>
<evidence type="ECO:0000255" key="1">
    <source>
        <dbReference type="HAMAP-Rule" id="MF_01318"/>
    </source>
</evidence>
<evidence type="ECO:0000305" key="2"/>
<reference key="1">
    <citation type="journal article" date="2008" name="Proc. Natl. Acad. Sci. U.S.A.">
        <title>The genome sequence of Bifidobacterium longum subsp. infantis reveals adaptations for milk utilization within the infant microbiome.</title>
        <authorList>
            <person name="Sela D.A."/>
            <person name="Chapman J."/>
            <person name="Adeuya A."/>
            <person name="Kim J.H."/>
            <person name="Chen F."/>
            <person name="Whitehead T.R."/>
            <person name="Lapidus A."/>
            <person name="Rokhsar D.S."/>
            <person name="Lebrilla C.B."/>
            <person name="German J.B."/>
            <person name="Price N.P."/>
            <person name="Richardson P.M."/>
            <person name="Mills D.A."/>
        </authorList>
    </citation>
    <scope>NUCLEOTIDE SEQUENCE [LARGE SCALE GENOMIC DNA]</scope>
    <source>
        <strain>ATCC 15697 / DSM 20088 / JCM 1222 / NCTC 11817 / S12</strain>
    </source>
</reference>
<reference key="2">
    <citation type="journal article" date="2011" name="Nature">
        <title>Bifidobacteria can protect from enteropathogenic infection through production of acetate.</title>
        <authorList>
            <person name="Fukuda S."/>
            <person name="Toh H."/>
            <person name="Hase K."/>
            <person name="Oshima K."/>
            <person name="Nakanishi Y."/>
            <person name="Yoshimura K."/>
            <person name="Tobe T."/>
            <person name="Clarke J.M."/>
            <person name="Topping D.L."/>
            <person name="Suzuki T."/>
            <person name="Taylor T.D."/>
            <person name="Itoh K."/>
            <person name="Kikuchi J."/>
            <person name="Morita H."/>
            <person name="Hattori M."/>
            <person name="Ohno H."/>
        </authorList>
    </citation>
    <scope>NUCLEOTIDE SEQUENCE [LARGE SCALE GENOMIC DNA]</scope>
    <source>
        <strain>ATCC 15697 / DSM 20088 / JCM 1222 / NCTC 11817 / S12</strain>
    </source>
</reference>
<protein>
    <recommendedName>
        <fullName evidence="1">Large ribosomal subunit protein uL1</fullName>
    </recommendedName>
    <alternativeName>
        <fullName evidence="2">50S ribosomal protein L1</fullName>
    </alternativeName>
</protein>
<comment type="function">
    <text evidence="1">Binds directly to 23S rRNA. The L1 stalk is quite mobile in the ribosome, and is involved in E site tRNA release.</text>
</comment>
<comment type="function">
    <text evidence="1">Protein L1 is also a translational repressor protein, it controls the translation of the L11 operon by binding to its mRNA.</text>
</comment>
<comment type="subunit">
    <text evidence="1">Part of the 50S ribosomal subunit.</text>
</comment>
<comment type="similarity">
    <text evidence="1">Belongs to the universal ribosomal protein uL1 family.</text>
</comment>
<proteinExistence type="inferred from homology"/>
<gene>
    <name evidence="1" type="primary">rplA</name>
    <name type="ordered locus">Blon_2293</name>
    <name type="ordered locus">BLIJ_2367</name>
</gene>
<name>RL1_BIFLS</name>
<feature type="chain" id="PRO_1000165661" description="Large ribosomal subunit protein uL1">
    <location>
        <begin position="1"/>
        <end position="230"/>
    </location>
</feature>
<keyword id="KW-0678">Repressor</keyword>
<keyword id="KW-0687">Ribonucleoprotein</keyword>
<keyword id="KW-0689">Ribosomal protein</keyword>
<keyword id="KW-0694">RNA-binding</keyword>
<keyword id="KW-0699">rRNA-binding</keyword>
<keyword id="KW-0810">Translation regulation</keyword>
<keyword id="KW-0820">tRNA-binding</keyword>